<comment type="function">
    <text evidence="1">Small subunit of the glutamine-dependent carbamoyl phosphate synthetase (CPSase). CPSase catalyzes the formation of carbamoyl phosphate from the ammonia moiety of glutamine, carbonate, and phosphate donated by ATP, constituting the first step of 2 biosynthetic pathways, one leading to arginine and/or urea and the other to pyrimidine nucleotides. The small subunit (glutamine amidotransferase) binds and cleaves glutamine to supply the large subunit with the substrate ammonia.</text>
</comment>
<comment type="catalytic activity">
    <reaction evidence="1">
        <text>hydrogencarbonate + L-glutamine + 2 ATP + H2O = carbamoyl phosphate + L-glutamate + 2 ADP + phosphate + 2 H(+)</text>
        <dbReference type="Rhea" id="RHEA:18633"/>
        <dbReference type="ChEBI" id="CHEBI:15377"/>
        <dbReference type="ChEBI" id="CHEBI:15378"/>
        <dbReference type="ChEBI" id="CHEBI:17544"/>
        <dbReference type="ChEBI" id="CHEBI:29985"/>
        <dbReference type="ChEBI" id="CHEBI:30616"/>
        <dbReference type="ChEBI" id="CHEBI:43474"/>
        <dbReference type="ChEBI" id="CHEBI:58228"/>
        <dbReference type="ChEBI" id="CHEBI:58359"/>
        <dbReference type="ChEBI" id="CHEBI:456216"/>
        <dbReference type="EC" id="6.3.5.5"/>
    </reaction>
</comment>
<comment type="catalytic activity">
    <molecule>Carbamoyl phosphate synthase small chain</molecule>
    <reaction evidence="1">
        <text>L-glutamine + H2O = L-glutamate + NH4(+)</text>
        <dbReference type="Rhea" id="RHEA:15889"/>
        <dbReference type="ChEBI" id="CHEBI:15377"/>
        <dbReference type="ChEBI" id="CHEBI:28938"/>
        <dbReference type="ChEBI" id="CHEBI:29985"/>
        <dbReference type="ChEBI" id="CHEBI:58359"/>
    </reaction>
</comment>
<comment type="pathway">
    <text evidence="1">Amino-acid biosynthesis; L-arginine biosynthesis; carbamoyl phosphate from bicarbonate: step 1/1.</text>
</comment>
<comment type="pathway">
    <text evidence="1">Pyrimidine metabolism; UMP biosynthesis via de novo pathway; (S)-dihydroorotate from bicarbonate: step 1/3.</text>
</comment>
<comment type="subunit">
    <text evidence="1">Composed of two chains; the small (or glutamine) chain promotes the hydrolysis of glutamine to ammonia, which is used by the large (or ammonia) chain to synthesize carbamoyl phosphate. Tetramer of heterodimers (alpha,beta)4.</text>
</comment>
<comment type="similarity">
    <text evidence="1">Belongs to the CarA family.</text>
</comment>
<evidence type="ECO:0000255" key="1">
    <source>
        <dbReference type="HAMAP-Rule" id="MF_01209"/>
    </source>
</evidence>
<organism>
    <name type="scientific">Pseudomonas syringae pv. tomato (strain ATCC BAA-871 / DC3000)</name>
    <dbReference type="NCBI Taxonomy" id="223283"/>
    <lineage>
        <taxon>Bacteria</taxon>
        <taxon>Pseudomonadati</taxon>
        <taxon>Pseudomonadota</taxon>
        <taxon>Gammaproteobacteria</taxon>
        <taxon>Pseudomonadales</taxon>
        <taxon>Pseudomonadaceae</taxon>
        <taxon>Pseudomonas</taxon>
    </lineage>
</organism>
<gene>
    <name evidence="1" type="primary">carA</name>
    <name type="ordered locus">PSPTO_4502</name>
</gene>
<keyword id="KW-0028">Amino-acid biosynthesis</keyword>
<keyword id="KW-0055">Arginine biosynthesis</keyword>
<keyword id="KW-0067">ATP-binding</keyword>
<keyword id="KW-0315">Glutamine amidotransferase</keyword>
<keyword id="KW-0436">Ligase</keyword>
<keyword id="KW-0547">Nucleotide-binding</keyword>
<keyword id="KW-0665">Pyrimidine biosynthesis</keyword>
<keyword id="KW-1185">Reference proteome</keyword>
<proteinExistence type="inferred from homology"/>
<protein>
    <recommendedName>
        <fullName evidence="1">Carbamoyl phosphate synthase small chain</fullName>
        <ecNumber evidence="1">6.3.5.5</ecNumber>
    </recommendedName>
    <alternativeName>
        <fullName evidence="1">Carbamoyl phosphate synthetase glutamine chain</fullName>
    </alternativeName>
</protein>
<accession>Q87WP3</accession>
<feature type="chain" id="PRO_0000112306" description="Carbamoyl phosphate synthase small chain">
    <location>
        <begin position="1"/>
        <end position="378"/>
    </location>
</feature>
<feature type="domain" description="Glutamine amidotransferase type-1" evidence="1">
    <location>
        <begin position="193"/>
        <end position="378"/>
    </location>
</feature>
<feature type="region of interest" description="CPSase" evidence="1">
    <location>
        <begin position="1"/>
        <end position="189"/>
    </location>
</feature>
<feature type="active site" description="Nucleophile" evidence="1">
    <location>
        <position position="269"/>
    </location>
</feature>
<feature type="active site" evidence="1">
    <location>
        <position position="353"/>
    </location>
</feature>
<feature type="active site" evidence="1">
    <location>
        <position position="355"/>
    </location>
</feature>
<feature type="binding site" evidence="1">
    <location>
        <position position="47"/>
    </location>
    <ligand>
        <name>L-glutamine</name>
        <dbReference type="ChEBI" id="CHEBI:58359"/>
    </ligand>
</feature>
<feature type="binding site" evidence="1">
    <location>
        <position position="241"/>
    </location>
    <ligand>
        <name>L-glutamine</name>
        <dbReference type="ChEBI" id="CHEBI:58359"/>
    </ligand>
</feature>
<feature type="binding site" evidence="1">
    <location>
        <position position="243"/>
    </location>
    <ligand>
        <name>L-glutamine</name>
        <dbReference type="ChEBI" id="CHEBI:58359"/>
    </ligand>
</feature>
<feature type="binding site" evidence="1">
    <location>
        <position position="270"/>
    </location>
    <ligand>
        <name>L-glutamine</name>
        <dbReference type="ChEBI" id="CHEBI:58359"/>
    </ligand>
</feature>
<feature type="binding site" evidence="1">
    <location>
        <position position="273"/>
    </location>
    <ligand>
        <name>L-glutamine</name>
        <dbReference type="ChEBI" id="CHEBI:58359"/>
    </ligand>
</feature>
<feature type="binding site" evidence="1">
    <location>
        <position position="311"/>
    </location>
    <ligand>
        <name>L-glutamine</name>
        <dbReference type="ChEBI" id="CHEBI:58359"/>
    </ligand>
</feature>
<feature type="binding site" evidence="1">
    <location>
        <position position="313"/>
    </location>
    <ligand>
        <name>L-glutamine</name>
        <dbReference type="ChEBI" id="CHEBI:58359"/>
    </ligand>
</feature>
<feature type="binding site" evidence="1">
    <location>
        <position position="314"/>
    </location>
    <ligand>
        <name>L-glutamine</name>
        <dbReference type="ChEBI" id="CHEBI:58359"/>
    </ligand>
</feature>
<sequence>MTKPAILALADGSIFRGEAIGADGQTVGEVVFNTAMTGYQEILTDPSYAQQIVTLTYPHIGNTGTTPEDAESDRVWSAGLVIRDLPLVASNWRNKMSLGDYLKANNVVAIAGIDTRRLTRILREKGAQNGCIMAGDNISEEAAIAAARGFPGLKGMDLAKEVSTKDTYEWRHSVWNLQTDSHPEIAASELPYHVVAYDYGVKVNILRMLVERGCRVTVVPAQTPASEVLAYKPDGVFLSNGPGDPEPCDYAIKAIKQVLETEVPVFGICLGHQLLALAAGAKTVKMGHGHHGANHPVQDLDTGVVMITSQNHGFAVDESTLPGNVRAIHKSLFDGTLQGIELTDKSAFSFQGHPEASPGPNDVAPLFDRFIDAMAKRR</sequence>
<dbReference type="EC" id="6.3.5.5" evidence="1"/>
<dbReference type="EMBL" id="AE016853">
    <property type="protein sequence ID" value="AAO57950.1"/>
    <property type="molecule type" value="Genomic_DNA"/>
</dbReference>
<dbReference type="RefSeq" id="NP_794255.1">
    <property type="nucleotide sequence ID" value="NC_004578.1"/>
</dbReference>
<dbReference type="RefSeq" id="WP_007243710.1">
    <property type="nucleotide sequence ID" value="NC_004578.1"/>
</dbReference>
<dbReference type="SMR" id="Q87WP3"/>
<dbReference type="STRING" id="223283.PSPTO_4502"/>
<dbReference type="GeneID" id="61789764"/>
<dbReference type="KEGG" id="pst:PSPTO_4502"/>
<dbReference type="PATRIC" id="fig|223283.9.peg.4618"/>
<dbReference type="eggNOG" id="COG0505">
    <property type="taxonomic scope" value="Bacteria"/>
</dbReference>
<dbReference type="HOGENOM" id="CLU_035901_1_1_6"/>
<dbReference type="OrthoDB" id="9804328at2"/>
<dbReference type="PhylomeDB" id="Q87WP3"/>
<dbReference type="UniPathway" id="UPA00068">
    <property type="reaction ID" value="UER00171"/>
</dbReference>
<dbReference type="UniPathway" id="UPA00070">
    <property type="reaction ID" value="UER00115"/>
</dbReference>
<dbReference type="PHI-base" id="PHI:6594"/>
<dbReference type="Proteomes" id="UP000002515">
    <property type="component" value="Chromosome"/>
</dbReference>
<dbReference type="GO" id="GO:0005524">
    <property type="term" value="F:ATP binding"/>
    <property type="evidence" value="ECO:0007669"/>
    <property type="project" value="UniProtKB-UniRule"/>
</dbReference>
<dbReference type="GO" id="GO:0004088">
    <property type="term" value="F:carbamoyl-phosphate synthase (glutamine-hydrolyzing) activity"/>
    <property type="evidence" value="ECO:0007669"/>
    <property type="project" value="UniProtKB-UniRule"/>
</dbReference>
<dbReference type="GO" id="GO:0004359">
    <property type="term" value="F:glutaminase activity"/>
    <property type="evidence" value="ECO:0007669"/>
    <property type="project" value="RHEA"/>
</dbReference>
<dbReference type="GO" id="GO:0006207">
    <property type="term" value="P:'de novo' pyrimidine nucleobase biosynthetic process"/>
    <property type="evidence" value="ECO:0007669"/>
    <property type="project" value="InterPro"/>
</dbReference>
<dbReference type="GO" id="GO:0044205">
    <property type="term" value="P:'de novo' UMP biosynthetic process"/>
    <property type="evidence" value="ECO:0007669"/>
    <property type="project" value="UniProtKB-UniRule"/>
</dbReference>
<dbReference type="GO" id="GO:0006541">
    <property type="term" value="P:glutamine metabolic process"/>
    <property type="evidence" value="ECO:0007669"/>
    <property type="project" value="InterPro"/>
</dbReference>
<dbReference type="GO" id="GO:0006526">
    <property type="term" value="P:L-arginine biosynthetic process"/>
    <property type="evidence" value="ECO:0007669"/>
    <property type="project" value="UniProtKB-UniRule"/>
</dbReference>
<dbReference type="CDD" id="cd01744">
    <property type="entry name" value="GATase1_CPSase"/>
    <property type="match status" value="1"/>
</dbReference>
<dbReference type="FunFam" id="3.40.50.880:FF:000011">
    <property type="entry name" value="Carbamoyl-phosphate synthase small chain"/>
    <property type="match status" value="1"/>
</dbReference>
<dbReference type="FunFam" id="3.50.30.20:FF:000001">
    <property type="entry name" value="Carbamoyl-phosphate synthase small chain"/>
    <property type="match status" value="1"/>
</dbReference>
<dbReference type="Gene3D" id="3.40.50.880">
    <property type="match status" value="1"/>
</dbReference>
<dbReference type="Gene3D" id="3.50.30.20">
    <property type="entry name" value="Carbamoyl-phosphate synthase small subunit, N-terminal domain"/>
    <property type="match status" value="1"/>
</dbReference>
<dbReference type="HAMAP" id="MF_01209">
    <property type="entry name" value="CPSase_S_chain"/>
    <property type="match status" value="1"/>
</dbReference>
<dbReference type="InterPro" id="IPR050472">
    <property type="entry name" value="Anth_synth/Amidotransfase"/>
</dbReference>
<dbReference type="InterPro" id="IPR006274">
    <property type="entry name" value="CarbamoylP_synth_ssu"/>
</dbReference>
<dbReference type="InterPro" id="IPR002474">
    <property type="entry name" value="CarbamoylP_synth_ssu_N"/>
</dbReference>
<dbReference type="InterPro" id="IPR036480">
    <property type="entry name" value="CarbP_synth_ssu_N_sf"/>
</dbReference>
<dbReference type="InterPro" id="IPR029062">
    <property type="entry name" value="Class_I_gatase-like"/>
</dbReference>
<dbReference type="InterPro" id="IPR035686">
    <property type="entry name" value="CPSase_GATase1"/>
</dbReference>
<dbReference type="InterPro" id="IPR017926">
    <property type="entry name" value="GATASE"/>
</dbReference>
<dbReference type="NCBIfam" id="TIGR01368">
    <property type="entry name" value="CPSaseIIsmall"/>
    <property type="match status" value="1"/>
</dbReference>
<dbReference type="NCBIfam" id="NF009475">
    <property type="entry name" value="PRK12838.1"/>
    <property type="match status" value="1"/>
</dbReference>
<dbReference type="PANTHER" id="PTHR43418:SF7">
    <property type="entry name" value="CARBAMOYL-PHOSPHATE SYNTHASE SMALL CHAIN"/>
    <property type="match status" value="1"/>
</dbReference>
<dbReference type="PANTHER" id="PTHR43418">
    <property type="entry name" value="MULTIFUNCTIONAL TRYPTOPHAN BIOSYNTHESIS PROTEIN-RELATED"/>
    <property type="match status" value="1"/>
</dbReference>
<dbReference type="Pfam" id="PF00988">
    <property type="entry name" value="CPSase_sm_chain"/>
    <property type="match status" value="1"/>
</dbReference>
<dbReference type="Pfam" id="PF00117">
    <property type="entry name" value="GATase"/>
    <property type="match status" value="1"/>
</dbReference>
<dbReference type="PRINTS" id="PR00097">
    <property type="entry name" value="ANTSNTHASEII"/>
</dbReference>
<dbReference type="PRINTS" id="PR00099">
    <property type="entry name" value="CPSGATASE"/>
</dbReference>
<dbReference type="PRINTS" id="PR00096">
    <property type="entry name" value="GATASE"/>
</dbReference>
<dbReference type="SMART" id="SM01097">
    <property type="entry name" value="CPSase_sm_chain"/>
    <property type="match status" value="1"/>
</dbReference>
<dbReference type="SUPFAM" id="SSF52021">
    <property type="entry name" value="Carbamoyl phosphate synthetase, small subunit N-terminal domain"/>
    <property type="match status" value="1"/>
</dbReference>
<dbReference type="SUPFAM" id="SSF52317">
    <property type="entry name" value="Class I glutamine amidotransferase-like"/>
    <property type="match status" value="1"/>
</dbReference>
<dbReference type="PROSITE" id="PS51273">
    <property type="entry name" value="GATASE_TYPE_1"/>
    <property type="match status" value="1"/>
</dbReference>
<reference key="1">
    <citation type="journal article" date="2003" name="Proc. Natl. Acad. Sci. U.S.A.">
        <title>The complete genome sequence of the Arabidopsis and tomato pathogen Pseudomonas syringae pv. tomato DC3000.</title>
        <authorList>
            <person name="Buell C.R."/>
            <person name="Joardar V."/>
            <person name="Lindeberg M."/>
            <person name="Selengut J."/>
            <person name="Paulsen I.T."/>
            <person name="Gwinn M.L."/>
            <person name="Dodson R.J."/>
            <person name="DeBoy R.T."/>
            <person name="Durkin A.S."/>
            <person name="Kolonay J.F."/>
            <person name="Madupu R."/>
            <person name="Daugherty S.C."/>
            <person name="Brinkac L.M."/>
            <person name="Beanan M.J."/>
            <person name="Haft D.H."/>
            <person name="Nelson W.C."/>
            <person name="Davidsen T.M."/>
            <person name="Zafar N."/>
            <person name="Zhou L."/>
            <person name="Liu J."/>
            <person name="Yuan Q."/>
            <person name="Khouri H.M."/>
            <person name="Fedorova N.B."/>
            <person name="Tran B."/>
            <person name="Russell D."/>
            <person name="Berry K.J."/>
            <person name="Utterback T.R."/>
            <person name="Van Aken S.E."/>
            <person name="Feldblyum T.V."/>
            <person name="D'Ascenzo M."/>
            <person name="Deng W.-L."/>
            <person name="Ramos A.R."/>
            <person name="Alfano J.R."/>
            <person name="Cartinhour S."/>
            <person name="Chatterjee A.K."/>
            <person name="Delaney T.P."/>
            <person name="Lazarowitz S.G."/>
            <person name="Martin G.B."/>
            <person name="Schneider D.J."/>
            <person name="Tang X."/>
            <person name="Bender C.L."/>
            <person name="White O."/>
            <person name="Fraser C.M."/>
            <person name="Collmer A."/>
        </authorList>
    </citation>
    <scope>NUCLEOTIDE SEQUENCE [LARGE SCALE GENOMIC DNA]</scope>
    <source>
        <strain>ATCC BAA-871 / DC3000</strain>
    </source>
</reference>
<name>CARA_PSESM</name>